<sequence>MGARNSVLRGKKADELEKVRLRPGGKKKYRLKHIVWAANELDKFGLAESLLESKEGCQKILRVLDPLVPTGSENLKSLFNTVCVIWCLHAEEKVKDTEEAKKLAQRHLVAETGTAEKMPNTSRPTAPPSGKRGNYPVQQAGGNYVHVPLSPRTLNAWVKLVEEKKFGAEVVPGFQALSEGCTPYDINQMLNCVGDHQAAMQIIREIINEEAADWDSQHPIPGPLPAGQLRDPRGSDIAGTTSTVDEQIQWMYRPQNPVPVGNIYRRWIQIGLQKCVRKYNPTNILDIKQGPKEPFQSYVDRFYKSLRAEQTDPAVKNWMTQTLLIQNANPDCKLVLKGLGMNPTLEEMLTACQGVGGPGQKARLMAEALKEAMGPSPIPFAAAQQRKAIRYWNCGKEGHSARQCRAPRRQGCWKCGKPGHIMANCPERQAGFFRVGPTGKEASQLPRDPSPSGADTNSTSGRSSSGTVGEIYAAREKAEGAEGETIQRGDGGLAAPRAERDTSQRGDRGLAAPQFSLWKRPVVTAYIEDQPVEVLLDTGADDSIVAGIELGDNYTPKIVGGIGGFINTKEYKNVEIKVLNKRVRATIMTGDTPINIFGRNILTALGMSLNLPVAKIEPIKVTLKPGKDGPRLKQWPLTKEKIEALKEICEKMEKEGQLEEAPPTNPYNTPTFAIKKKDKNKWRMLIDFRELNKVTQDFTEIQLGIPHPAGLAKKKRISILDVGDAYFSIPLHEDFRQYTAFTLPAVNNMEPGKRYIYKVLPQGWKGSPAIFQYTMRQVLEPFRKANPDVILIQYMDDILIASDRTGLEHDKVVLQLKELLNGLGFSTPDEKFQKDPPFQWMGCELWPTKWKLQKLQLPQKDIWTVNDIQKLVGVLNWAAQIYSGIKTKHLCRLIRGKMTLTEEVQWTELAEAELEENKIILSQEQEGYYYQEEKELEATIQKSQGHQWTYKIHQEEKILKVGKYAKIKNTHTNGVRLLAQVVQKIGKEALVIWGRIPKFHLPVERETWEQWWDNYWQVTWIPEWDFVSTPPLVRLTFNLVGDPIPGAETFYTDGSCNRQSKEGKAGYVTDRGKDKVKVLEQTTNQQAELEVFRMALADSGPKVNIIVDSQYVMGIVAGQPTESENRIVNQIIEEMIKKEAVYVAWVPAHKGIGGNQEVDHLVSQGIRQVLFLEKIEPAQEEHEKYHSIIKELTHKFGIPLLVARQIVNSCAQCQQKGEAIHGQVNAEIGVWQMDYTHLEGKIIIVAVHVASGFIEAEVIPQESGRQTALFLLKLASRWPITHLHTDNGPNFTSQEVKMVAWWVGIEQSFGVPYNPQSQGVVEAMNHHLKNQISRIREQANTIETIVLMAVHCMNFKRRGGIGDMTPAERLINMITTEQEIQFLQRKNSNFKNFQVYYREGRDQLWKGPGELLWKGEGAVIVKVGTDIKVVPRRKAKIIRDYGGRQELDSSPHLEGAREDGEMACPCQVPEIQNKRPRGGALCSPPQGGMGMVDLQQGNIPTTRKKSSRNTGILEPNTRKRMALLSCSKINLVYRKVLDRCYPRLCRHPNT</sequence>
<organismHost>
    <name type="scientific">Homo sapiens</name>
    <name type="common">Human</name>
    <dbReference type="NCBI Taxonomy" id="9606"/>
</organismHost>
<comment type="function">
    <molecule>Gag-Pol polyprotein</molecule>
    <text evidence="1">Mediates, with Gag polyprotein, the essential events in virion assembly, including binding the plasma membrane, making the protein-protein interactions necessary to create spherical particles, recruiting the viral Env proteins, and packaging the genomic RNA via direct interactions with the RNA packaging sequence (Psi). Gag-Pol polyprotein may regulate its own translation, by the binding genomic RNA in the 5'-UTR. At low concentration, the polyprotein would promote translation, whereas at high concentration, the polyprotein would encapsidate genomic RNA and then shut off translation.</text>
</comment>
<comment type="function">
    <molecule>Matrix protein p17</molecule>
    <text evidence="8">Targets the polyprotein to the plasma membrane via a multipartite membrane-binding signal, that includes its myristoylated N-terminus. Matrix protein is part of the pre-integration complex. Implicated in the release from host cell mediated by Vpu. Binds to RNA.</text>
</comment>
<comment type="function">
    <molecule>Capsid protein p24</molecule>
    <text evidence="5 8">Forms the conical core that encapsulates the genomic RNA-nucleocapsid complex in the virion. Most core are conical, with only 7% tubular. The core is constituted by capsid protein hexamer subunits. The core is disassembled soon after virion entry (By similarity). Host restriction factors such as TRIM5-alpha or TRIMCyp bind retroviral capsids and cause premature capsid disassembly, leading to blocks in reverse transcription. Capsid restriction by TRIM5 is one of the factors which restricts HIV-1 to the human species. Host PIN1 apparently facilitates the virion uncoating. On the other hand, interactions with PDZD8 or CYPA stabilize the capsid.</text>
</comment>
<comment type="function">
    <molecule>Nucleocapsid protein p7</molecule>
    <text evidence="5">Encapsulates and protects viral dimeric unspliced genomic RNA (gRNA). Binds these RNAs through its zinc fingers. Acts as a nucleic acid chaperone which is involved in rearangement of nucleic acid secondary structure during gRNA retrotranscription. Also facilitates template switch leading to recombination. As part of the polyprotein, participates in gRNA dimerization, packaging, tRNA incorporation and virion assembly.</text>
</comment>
<comment type="function">
    <molecule>Protease</molecule>
    <text evidence="5 11">Aspartyl protease that mediates proteolytic cleavages of Gag and Gag-Pol polyproteins during or shortly after the release of the virion from the plasma membrane. Cleavages take place as an ordered, step-wise cascade to yield mature proteins. This process is called maturation. Displays maximal activity during the budding process just prior to particle release from the cell. Also cleaves Nef and Vif, probably concomitantly with viral structural proteins on maturation of virus particles. Hydrolyzes host EIF4GI and PABP1 in order to shut off the capped cellular mRNA translation. The resulting inhibition of cellular protein synthesis serves to ensure maximal viral gene expression and to evade host immune response (By similarity).</text>
</comment>
<comment type="function">
    <molecule>Reverse transcriptase/ribonuclease H</molecule>
    <text evidence="5">Multifunctional enzyme that converts the viral RNA genome into dsDNA in the cytoplasm, shortly after virus entry into the cell. This enzyme displays a DNA polymerase activity that can copy either DNA or RNA templates, and a ribonuclease H (RNase H) activity that cleaves the RNA strand of RNA-DNA heteroduplexes in a partially processive 3' to 5' endonucleasic mode. Conversion of viral genomic RNA into dsDNA requires many steps. A tRNA(3)-Lys binds to the primer-binding site (PBS) situated at the 5'-end of the viral RNA. RT uses the 3' end of the tRNA primer to perform a short round of RNA-dependent minus-strand DNA synthesis. The reading proceeds through the U5 region and ends after the repeated (R) region which is present at both ends of viral RNA. The portion of the RNA-DNA heteroduplex is digested by the RNase H, resulting in a ssDNA product attached to the tRNA primer. This ssDNA/tRNA hybridizes with the identical R region situated at the 3' end of viral RNA. This template exchange, known as minus-strand DNA strong stop transfer, can be either intra- or intermolecular. RT uses the 3' end of this newly synthesized short ssDNA to perform the RNA-dependent minus-strand DNA synthesis of the whole template. RNase H digests the RNA template except for two polypurine tracts (PPTs) situated at the 5'-end and near the center of the genome. It is not clear if both polymerase and RNase H activities are simultaneous. RNase H probably can proceed both in a polymerase-dependent (RNA cut into small fragments by the same RT performing DNA synthesis) and a polymerase-independent mode (cleavage of remaining RNA fragments by free RTs). Secondly, RT performs DNA-directed plus-strand DNA synthesis using the PPTs that have not been removed by RNase H as primers. PPTs and tRNA primers are then removed by RNase H. The 3' and 5' ssDNA PBS regions hybridize to form a circular dsDNA intermediate. Strand displacement synthesis by RT to the PBS and PPT ends produces a blunt ended, linear dsDNA copy of the viral genome that includes long terminal repeats (LTRs) at both ends.</text>
</comment>
<comment type="function">
    <molecule>Integrase</molecule>
    <text evidence="5">Catalyzes viral DNA integration into the host chromosome, by performing a series of DNA cutting and joining reactions. This enzyme activity takes place after virion entry into a cell and reverse transcription of the RNA genome in dsDNA. The first step in the integration process is 3' processing. This step requires a complex comprising the viral genome, matrix protein, Vpr and integrase. This complex is called the pre-integration complex (PIC). The integrase protein removes 2 nucleotides from each 3' end of the viral DNA, leaving recessed CA OH's at the 3' ends. In the second step, the PIC enters cell nucleus. This process is mediated through integrase and Vpr proteins, and allows the virus to infect a non dividing cell. This ability to enter the nucleus is specific of lentiviruses, other retroviruses cannot and rely on cell division to access cell chromosomes. In the third step, termed strand transfer, the integrase protein joins the previously processed 3' ends to the 5' ends of strands of target cellular DNA at the site of integration. The 5'-ends are produced by integrase-catalyzed staggered cuts, 5 bp apart. A Y-shaped, gapped, recombination intermediate results, with the 5'-ends of the viral DNA strands and the 3' ends of target DNA strands remaining unjoined, flanking a gap of 5 bp. The last step is viral DNA integration into host chromosome. This involves host DNA repair synthesis in which the 5 bp gaps between the unjoined strands are filled in and then ligated. Since this process occurs at both cuts flanking the HIV genome, a 5 bp duplication of host DNA is produced at the ends of HIV-1 integration. Alternatively, Integrase may catalyze the excision of viral DNA just after strand transfer, this is termed disintegration.</text>
</comment>
<comment type="catalytic activity">
    <reaction evidence="11">
        <text>Endopeptidase for which the P1 residue is preferably hydrophobic.</text>
        <dbReference type="EC" id="3.4.23.47"/>
    </reaction>
</comment>
<comment type="catalytic activity">
    <reaction evidence="1">
        <text>Endohydrolysis of RNA in RNA/DNA hybrids. Three different cleavage modes: 1. sequence-specific internal cleavage of RNA. Human immunodeficiency virus type 1 and Moloney murine leukemia virus enzymes prefer to cleave the RNA strand one nucleotide away from the RNA-DNA junction. 2. RNA 5'-end directed cleavage 13-19 nucleotides from the RNA end. 3. DNA 3'-end directed cleavage 15-20 nucleotides away from the primer terminus.</text>
        <dbReference type="EC" id="3.1.26.13"/>
    </reaction>
</comment>
<comment type="catalytic activity">
    <reaction evidence="1">
        <text>3'-end directed exonucleolytic cleavage of viral RNA-DNA hybrid.</text>
        <dbReference type="EC" id="3.1.13.2"/>
    </reaction>
</comment>
<comment type="catalytic activity">
    <reaction evidence="12">
        <text>DNA(n) + a 2'-deoxyribonucleoside 5'-triphosphate = DNA(n+1) + diphosphate</text>
        <dbReference type="Rhea" id="RHEA:22508"/>
        <dbReference type="Rhea" id="RHEA-COMP:17339"/>
        <dbReference type="Rhea" id="RHEA-COMP:17340"/>
        <dbReference type="ChEBI" id="CHEBI:33019"/>
        <dbReference type="ChEBI" id="CHEBI:61560"/>
        <dbReference type="ChEBI" id="CHEBI:173112"/>
        <dbReference type="EC" id="2.7.7.49"/>
    </reaction>
</comment>
<comment type="catalytic activity">
    <reaction evidence="12">
        <text>DNA(n) + a 2'-deoxyribonucleoside 5'-triphosphate = DNA(n+1) + diphosphate</text>
        <dbReference type="Rhea" id="RHEA:22508"/>
        <dbReference type="Rhea" id="RHEA-COMP:17339"/>
        <dbReference type="Rhea" id="RHEA-COMP:17340"/>
        <dbReference type="ChEBI" id="CHEBI:33019"/>
        <dbReference type="ChEBI" id="CHEBI:61560"/>
        <dbReference type="ChEBI" id="CHEBI:173112"/>
        <dbReference type="EC" id="2.7.7.7"/>
    </reaction>
</comment>
<comment type="cofactor">
    <cofactor evidence="1">
        <name>Mg(2+)</name>
        <dbReference type="ChEBI" id="CHEBI:18420"/>
    </cofactor>
    <text evidence="1">Binds 2 magnesium ions for reverse transcriptase polymerase activity.</text>
</comment>
<comment type="cofactor">
    <cofactor evidence="1">
        <name>Mg(2+)</name>
        <dbReference type="ChEBI" id="CHEBI:18420"/>
    </cofactor>
    <text evidence="1">Binds 2 magnesium ions for ribonuclease H (RNase H) activity. Substrate-binding is a precondition for magnesium binding.</text>
</comment>
<comment type="cofactor">
    <cofactor evidence="1">
        <name>Mg(2+)</name>
        <dbReference type="ChEBI" id="CHEBI:18420"/>
    </cofactor>
    <text evidence="1">Magnesium ions are required for integrase activity. Binds at least 1, maybe 2 magnesium ions.</text>
</comment>
<comment type="activity regulation">
    <text evidence="1">Protease: The viral protease is inhibited by many synthetic protease inhibitors (PIs), such as amprenavir, atazanavir, indinavir, loprinavir, nelfinavir, ritonavir and saquinavir. Use of protease inhibitors in tritherapy regimens permit more ambitious therapeutic strategies. Reverse transcriptase/ribonuclease H: RT can be inhibited either by nucleoside RT inhibitors (NRTIs) or by non nucleoside RT inhibitors (NNRTIs). NRTIs act as chain terminators, whereas NNRTIs inhibit DNA polymerization by binding a small hydrophobic pocket near the RT active site and inducing an allosteric change in this region. Classical NRTIs are abacavir, adefovir (PMEA), didanosine (ddI), lamivudine (3TC), stavudine (d4T), tenofovir (PMPA), zalcitabine (ddC), and zidovudine (AZT). Classical NNRTIs are atevirdine (BHAP U-87201E), delavirdine, efavirenz (DMP-266), emivirine (I-EBU), and nevirapine (BI-RG-587). The tritherapies used as a basic effective treatment of AIDS associate two NRTIs and one NNRTI.</text>
</comment>
<comment type="subunit">
    <molecule>Matrix protein p17</molecule>
    <text evidence="6 7">Homotrimer; further assembles as hexamers of trimers. Interacts with gp41 (via C-terminus). Interacts with host CALM1; this interaction induces a conformational change in the Matrix protein, triggering exposure of the myristate group. Interacts with host AP3D1; this interaction allows the polyprotein trafficking to multivesicular bodies during virus assembly. Part of the pre-integration complex (PIC) which is composed of viral genome, matrix protein, Vpr and integrase.</text>
</comment>
<comment type="subunit">
    <molecule>Capsid protein p24</molecule>
    <text evidence="2 6 7">Homodimer; the homodimer further multimerizes as homohexamers or homopentamers. Interacts with human PPIA/CYPA. Interacts with human NUP153. Interacts with host PDZD8; this interaction stabilizes the capsid. Interacts with monkey TRIM5; this interaction destabilizes the capsid.</text>
</comment>
<comment type="subunit">
    <molecule>Protease</molecule>
    <text evidence="5 8">Homodimer, whose active site consists of two apposed aspartic acid residues.</text>
</comment>
<comment type="subunit">
    <molecule>Reverse transcriptase/ribonuclease H</molecule>
    <text evidence="3">Heterodimer of p66 RT and p51 RT (RT p66/p51) (By similarity). Heterodimerization of RT is essential for DNA polymerase activity (By similarity). The overall folding of the subdomains is similar in p66 RT and p51 RT but the spatial arrangements of the subdomains are dramatically different (By similarity).</text>
</comment>
<comment type="subunit">
    <molecule>Integrase</molecule>
    <text evidence="4 5 8">Homotetramer; may further associate as a homohexadecamer (By similarity). Part of the pre-integration complex (PIC) which is composed of viral genome, matrix protein, Vpr and integrase. Interacts with human SMARCB1/INI1 and human PSIP1/LEDGF isoform 1. Interacts with human KPNA3; this interaction might play a role in nuclear import of the pre-integration complex (By similarity). Interacts with human NUP153; this interaction might play a role in nuclear import of the pre-integration complex (By similarity).</text>
</comment>
<comment type="subcellular location">
    <molecule>Gag-Pol polyprotein</molecule>
    <subcellularLocation>
        <location>Host cell membrane</location>
        <topology>Lipid-anchor</topology>
    </subcellularLocation>
    <subcellularLocation>
        <location>Host endosome</location>
        <location>Host multivesicular body</location>
    </subcellularLocation>
    <text evidence="8">These locations are linked to virus assembly sites. The main location is the cell membrane, but under some circumstances, late endosomal compartments can serve as productive sites for virion assembly.</text>
</comment>
<comment type="subcellular location">
    <molecule>Matrix protein p17</molecule>
    <subcellularLocation>
        <location>Virion membrane</location>
        <topology evidence="19">Lipid-anchor</topology>
    </subcellularLocation>
    <subcellularLocation>
        <location evidence="1">Host nucleus</location>
    </subcellularLocation>
    <subcellularLocation>
        <location evidence="1">Host cytoplasm</location>
    </subcellularLocation>
</comment>
<comment type="subcellular location">
    <molecule>Capsid protein p24</molecule>
    <subcellularLocation>
        <location evidence="19">Virion</location>
    </subcellularLocation>
</comment>
<comment type="subcellular location">
    <molecule>Nucleocapsid protein p7</molecule>
    <subcellularLocation>
        <location evidence="19">Virion</location>
    </subcellularLocation>
</comment>
<comment type="subcellular location">
    <molecule>Reverse transcriptase/ribonuclease H</molecule>
    <subcellularLocation>
        <location evidence="19">Virion</location>
    </subcellularLocation>
</comment>
<comment type="subcellular location">
    <molecule>Integrase</molecule>
    <subcellularLocation>
        <location evidence="19">Virion</location>
    </subcellularLocation>
    <subcellularLocation>
        <location evidence="19">Host nucleus</location>
    </subcellularLocation>
    <subcellularLocation>
        <location evidence="19">Host cytoplasm</location>
    </subcellularLocation>
    <text evidence="19">Nuclear at initial phase, cytoplasmic at assembly.</text>
</comment>
<comment type="alternative products">
    <event type="ribosomal frameshifting"/>
    <isoform>
        <id>P18096-1</id>
        <name>Gag-Pol polyprotein</name>
        <sequence type="displayed"/>
    </isoform>
    <isoform>
        <id>P18095-1</id>
        <name>Gag polyprotein</name>
        <sequence type="external"/>
    </isoform>
    <text>Translation results in the formation of the Gag polyprotein most of the time. Ribosomal frameshifting at the gag-pol genes boundary occurs at low frequency and produces the Gag-Pol polyprotein. This strategy of translation probably allows the virus to modulate the quantity of each viral protein. Maintenance of a correct Gag to Gag-Pol ratio is essential for RNA dimerization and viral infectivity.</text>
</comment>
<comment type="domain">
    <molecule>Reverse transcriptase/ribonuclease H</molecule>
    <text evidence="1">RT is structured in five subdomains: finger, palm, thumb, connection and RNase H. Within the palm subdomain, the 'primer grip' region is thought to be involved in the positioning of the primer terminus for accommodating the incoming nucleotide. The RNase H domain stabilizes the association of RT with primer-template.</text>
</comment>
<comment type="domain">
    <molecule>Reverse transcriptase/ribonuclease H</molecule>
    <text evidence="1">The tryptophan repeat motif is involved in RT p66/p51 dimerization (By similarity).</text>
</comment>
<comment type="domain">
    <molecule>Integrase</molecule>
    <text evidence="1">The core domain contains the D-x(n)-D-x(35)-E motif, named for the phylogenetically conserved glutamic acid and aspartic acid residues and the invariant 35 amino acid spacing between the second and third acidic residues. Each acidic residue of the D,D(35)E motif is independently essential for the 3'-processing and strand transfer activities of purified integrase protein.</text>
</comment>
<comment type="PTM">
    <molecule>Gag-Pol polyprotein</molecule>
    <text evidence="5 12">Specific enzymatic cleavages by the viral protease yield mature proteins. The protease is released by autocatalytic cleavage. The polyprotein is cleaved during and after budding, this process is termed maturation. Proteolytic cleavage of p66 RT removes the RNase H domain to yield the p51 RT subunit. Nucleocapsid protein p7 might be further cleaved after virus entry.</text>
</comment>
<comment type="miscellaneous">
    <molecule>Reverse transcriptase/ribonuclease H</molecule>
    <text evidence="1">Error-prone enzyme that lacks a proof-reading function. High mutations rate is a direct consequence of this characteristic. RT also displays frequent template switching leading to high recombination rate. Recombination mostly occurs between homologous regions of the two copackaged RNA genomes. If these two RNA molecules derive from different viral strains, reverse transcription will give rise to highly recombinated proviral DNAs.</text>
</comment>
<comment type="miscellaneous">
    <text>This isolate is from a German AIDS patient (with predominantly neurological complications) who was probably infected in Mali.</text>
</comment>
<comment type="miscellaneous">
    <text>The reverse transcriptase is an error-prone enzyme that lacks a proof-reading function. High mutations rate is a direct consequence of this characteristic. RT also displays frequent template switching leading to high recombination rate. Recombination mostly occurs between homologous regions of the two copackaged RNA genomes. If these two RNA molecules derive from different viral strains, reverse transcription will give rise to highly recombinated proviral DNAs.</text>
</comment>
<comment type="miscellaneous">
    <molecule>Isoform Gag-Pol polyprotein</molecule>
    <text>Produced by -1 ribosomal frameshifting.</text>
</comment>
<organism>
    <name type="scientific">Human immunodeficiency virus type 2 subtype A (isolate BEN)</name>
    <name type="common">HIV-2</name>
    <dbReference type="NCBI Taxonomy" id="11714"/>
    <lineage>
        <taxon>Viruses</taxon>
        <taxon>Riboviria</taxon>
        <taxon>Pararnavirae</taxon>
        <taxon>Artverviricota</taxon>
        <taxon>Revtraviricetes</taxon>
        <taxon>Ortervirales</taxon>
        <taxon>Retroviridae</taxon>
        <taxon>Orthoretrovirinae</taxon>
        <taxon>Lentivirus</taxon>
        <taxon>Human immunodeficiency virus 2</taxon>
    </lineage>
</organism>
<evidence type="ECO:0000250" key="1"/>
<evidence type="ECO:0000250" key="2">
    <source>
        <dbReference type="UniProtKB" id="P03348"/>
    </source>
</evidence>
<evidence type="ECO:0000250" key="3">
    <source>
        <dbReference type="UniProtKB" id="P03366"/>
    </source>
</evidence>
<evidence type="ECO:0000250" key="4">
    <source>
        <dbReference type="UniProtKB" id="P03367"/>
    </source>
</evidence>
<evidence type="ECO:0000250" key="5">
    <source>
        <dbReference type="UniProtKB" id="P04585"/>
    </source>
</evidence>
<evidence type="ECO:0000250" key="6">
    <source>
        <dbReference type="UniProtKB" id="P04591"/>
    </source>
</evidence>
<evidence type="ECO:0000250" key="7">
    <source>
        <dbReference type="UniProtKB" id="P12493"/>
    </source>
</evidence>
<evidence type="ECO:0000250" key="8">
    <source>
        <dbReference type="UniProtKB" id="P12497"/>
    </source>
</evidence>
<evidence type="ECO:0000255" key="9"/>
<evidence type="ECO:0000255" key="10">
    <source>
        <dbReference type="PROSITE-ProRule" id="PRU00047"/>
    </source>
</evidence>
<evidence type="ECO:0000255" key="11">
    <source>
        <dbReference type="PROSITE-ProRule" id="PRU00275"/>
    </source>
</evidence>
<evidence type="ECO:0000255" key="12">
    <source>
        <dbReference type="PROSITE-ProRule" id="PRU00405"/>
    </source>
</evidence>
<evidence type="ECO:0000255" key="13">
    <source>
        <dbReference type="PROSITE-ProRule" id="PRU00408"/>
    </source>
</evidence>
<evidence type="ECO:0000255" key="14">
    <source>
        <dbReference type="PROSITE-ProRule" id="PRU00450"/>
    </source>
</evidence>
<evidence type="ECO:0000255" key="15">
    <source>
        <dbReference type="PROSITE-ProRule" id="PRU00457"/>
    </source>
</evidence>
<evidence type="ECO:0000255" key="16">
    <source>
        <dbReference type="PROSITE-ProRule" id="PRU00506"/>
    </source>
</evidence>
<evidence type="ECO:0000255" key="17">
    <source>
        <dbReference type="PROSITE-ProRule" id="PRU10094"/>
    </source>
</evidence>
<evidence type="ECO:0000256" key="18">
    <source>
        <dbReference type="SAM" id="MobiDB-lite"/>
    </source>
</evidence>
<evidence type="ECO:0000305" key="19"/>
<protein>
    <recommendedName>
        <fullName>Gag-Pol polyprotein</fullName>
    </recommendedName>
    <alternativeName>
        <fullName>Pr160Gag-Pol</fullName>
    </alternativeName>
    <component>
        <recommendedName>
            <fullName>Matrix protein p17</fullName>
            <shortName>MA</shortName>
        </recommendedName>
    </component>
    <component>
        <recommendedName>
            <fullName>Capsid protein p24</fullName>
            <shortName>CA</shortName>
        </recommendedName>
    </component>
    <component>
        <recommendedName>
            <fullName evidence="8">Spacer peptide 1</fullName>
            <shortName>SP1</shortName>
        </recommendedName>
        <alternativeName>
            <fullName>p2</fullName>
        </alternativeName>
    </component>
    <component>
        <recommendedName>
            <fullName>Nucleocapsid protein p7</fullName>
            <shortName>NC</shortName>
        </recommendedName>
    </component>
    <component>
        <recommendedName>
            <fullName>Transframe peptide</fullName>
            <shortName>TF</shortName>
        </recommendedName>
    </component>
    <component>
        <recommendedName>
            <fullName>p6-pol</fullName>
            <shortName>p6*</shortName>
        </recommendedName>
    </component>
    <component>
        <recommendedName>
            <fullName>Protease</fullName>
            <ecNumber>3.4.23.47</ecNumber>
        </recommendedName>
        <alternativeName>
            <fullName>PR</fullName>
        </alternativeName>
        <alternativeName>
            <fullName>Retropepsin</fullName>
        </alternativeName>
    </component>
    <component>
        <recommendedName>
            <fullName>Reverse transcriptase/ribonuclease H</fullName>
            <ecNumber>2.7.7.49</ecNumber>
            <ecNumber>2.7.7.7</ecNumber>
            <ecNumber>3.1.26.13</ecNumber>
        </recommendedName>
        <alternativeName>
            <fullName>Exoribonuclease H</fullName>
            <ecNumber>3.1.13.2</ecNumber>
        </alternativeName>
        <alternativeName>
            <fullName>p66 RT</fullName>
        </alternativeName>
    </component>
    <component>
        <recommendedName>
            <fullName>p51 RT</fullName>
        </recommendedName>
    </component>
    <component>
        <recommendedName>
            <fullName>p15</fullName>
        </recommendedName>
    </component>
    <component>
        <recommendedName>
            <fullName>Integrase</fullName>
            <shortName>IN</shortName>
            <ecNumber evidence="5">2.7.7.-</ecNumber>
            <ecNumber evidence="5">3.1.-.-</ecNumber>
        </recommendedName>
    </component>
</protein>
<feature type="initiator methionine" description="Removed; by host" evidence="1">
    <location>
        <position position="1"/>
    </location>
</feature>
<feature type="chain" id="PRO_0000261290" description="Gag-Pol polyprotein">
    <location>
        <begin position="2"/>
        <end position="1550"/>
    </location>
</feature>
<feature type="chain" id="PRO_0000042460" description="Matrix protein p17" evidence="1">
    <location>
        <begin position="2"/>
        <end position="135"/>
    </location>
</feature>
<feature type="chain" id="PRO_0000042461" description="Capsid protein p24" evidence="1">
    <location>
        <begin position="136"/>
        <end position="365"/>
    </location>
</feature>
<feature type="peptide" id="PRO_0000042462" description="Spacer peptide 1" evidence="1">
    <location>
        <begin position="366"/>
        <end position="382"/>
    </location>
</feature>
<feature type="chain" id="PRO_0000042464" description="Nucleocapsid protein p7" evidence="1">
    <location>
        <begin position="383"/>
        <end position="431"/>
    </location>
</feature>
<feature type="peptide" id="PRO_0000246739" description="Transframe peptide" evidence="9">
    <location>
        <begin position="432"/>
        <end position="445"/>
    </location>
</feature>
<feature type="chain" id="PRO_0000042466" description="p6-pol" evidence="9">
    <location>
        <begin position="446"/>
        <end position="512"/>
    </location>
</feature>
<feature type="chain" id="PRO_0000038667" description="Protease" evidence="1">
    <location>
        <begin position="513"/>
        <end position="611"/>
    </location>
</feature>
<feature type="chain" id="PRO_0000042467" description="Reverse transcriptase/ribonuclease H" evidence="1">
    <location>
        <begin position="612"/>
        <end position="1170"/>
    </location>
</feature>
<feature type="chain" id="PRO_0000042468" description="p51 RT" evidence="1">
    <location>
        <begin position="612"/>
        <end position="1050"/>
    </location>
</feature>
<feature type="chain" id="PRO_0000042469" description="p15" evidence="1">
    <location>
        <begin position="1051"/>
        <end position="1170"/>
    </location>
</feature>
<feature type="chain" id="PRO_0000042470" description="Integrase" evidence="1">
    <location>
        <begin position="1171"/>
        <end position="1550"/>
    </location>
</feature>
<feature type="domain" description="Peptidase A2" evidence="11">
    <location>
        <begin position="532"/>
        <end position="601"/>
    </location>
</feature>
<feature type="domain" description="Reverse transcriptase" evidence="12">
    <location>
        <begin position="655"/>
        <end position="845"/>
    </location>
</feature>
<feature type="domain" description="RNase H type-1" evidence="13">
    <location>
        <begin position="1044"/>
        <end position="1167"/>
    </location>
</feature>
<feature type="domain" description="Integrase catalytic" evidence="15">
    <location>
        <begin position="1223"/>
        <end position="1374"/>
    </location>
</feature>
<feature type="zinc finger region" description="CCHC-type 1" evidence="10">
    <location>
        <begin position="389"/>
        <end position="406"/>
    </location>
</feature>
<feature type="zinc finger region" description="CCHC-type 2" evidence="10">
    <location>
        <begin position="410"/>
        <end position="427"/>
    </location>
</feature>
<feature type="zinc finger region" description="Integrase-type" evidence="14">
    <location>
        <begin position="1173"/>
        <end position="1214"/>
    </location>
</feature>
<feature type="DNA-binding region" description="Integrase-type" evidence="16">
    <location>
        <begin position="1393"/>
        <end position="1440"/>
    </location>
</feature>
<feature type="region of interest" description="Interaction with Gp41" evidence="8">
    <location>
        <begin position="7"/>
        <end position="31"/>
    </location>
</feature>
<feature type="region of interest" description="Disordered" evidence="18">
    <location>
        <begin position="110"/>
        <end position="136"/>
    </location>
</feature>
<feature type="region of interest" description="Interaction with human PPIA/CYPA and NUP153" evidence="8">
    <location>
        <begin position="191"/>
        <end position="228"/>
    </location>
</feature>
<feature type="region of interest" description="Dimerization/Multimerization of capsid protein p24" evidence="5">
    <location>
        <begin position="279"/>
        <end position="365"/>
    </location>
</feature>
<feature type="region of interest" description="Disordered" evidence="18">
    <location>
        <begin position="437"/>
        <end position="508"/>
    </location>
</feature>
<feature type="region of interest" description="Dimerization of protease" evidence="5">
    <location>
        <begin position="513"/>
        <end position="517"/>
    </location>
</feature>
<feature type="region of interest" description="Dimerization of protease" evidence="5">
    <location>
        <begin position="561"/>
        <end position="567"/>
    </location>
</feature>
<feature type="region of interest" description="Dimerization of protease" evidence="5">
    <location>
        <begin position="600"/>
        <end position="612"/>
    </location>
</feature>
<feature type="region of interest" description="RT 'primer grip'" evidence="1">
    <location>
        <begin position="838"/>
        <end position="846"/>
    </location>
</feature>
<feature type="short sequence motif" description="Nuclear export signal" evidence="1">
    <location>
        <begin position="16"/>
        <end position="22"/>
    </location>
</feature>
<feature type="short sequence motif" description="Nuclear localization signal" evidence="1">
    <location>
        <begin position="26"/>
        <end position="32"/>
    </location>
</feature>
<feature type="short sequence motif" description="Tryptophan repeat motif" evidence="1">
    <location>
        <begin position="1008"/>
        <end position="1024"/>
    </location>
</feature>
<feature type="compositionally biased region" description="Low complexity" evidence="18">
    <location>
        <begin position="456"/>
        <end position="469"/>
    </location>
</feature>
<feature type="compositionally biased region" description="Basic and acidic residues" evidence="18">
    <location>
        <begin position="497"/>
        <end position="508"/>
    </location>
</feature>
<feature type="active site" description="For protease activity; shared with dimeric partner" evidence="17">
    <location>
        <position position="537"/>
    </location>
</feature>
<feature type="binding site" evidence="1">
    <location>
        <position position="721"/>
    </location>
    <ligand>
        <name>Mg(2+)</name>
        <dbReference type="ChEBI" id="CHEBI:18420"/>
        <label>1</label>
        <note>catalytic; for reverse transcriptase activity</note>
    </ligand>
</feature>
<feature type="binding site" evidence="1">
    <location>
        <position position="796"/>
    </location>
    <ligand>
        <name>Mg(2+)</name>
        <dbReference type="ChEBI" id="CHEBI:18420"/>
        <label>1</label>
        <note>catalytic; for reverse transcriptase activity</note>
    </ligand>
</feature>
<feature type="binding site" evidence="1">
    <location>
        <position position="797"/>
    </location>
    <ligand>
        <name>Mg(2+)</name>
        <dbReference type="ChEBI" id="CHEBI:18420"/>
        <label>1</label>
        <note>catalytic; for reverse transcriptase activity</note>
    </ligand>
</feature>
<feature type="binding site" evidence="1">
    <location>
        <position position="1053"/>
    </location>
    <ligand>
        <name>Mg(2+)</name>
        <dbReference type="ChEBI" id="CHEBI:18420"/>
        <label>2</label>
        <note>catalytic; for RNase H activity</note>
    </ligand>
</feature>
<feature type="binding site" evidence="1">
    <location>
        <position position="1088"/>
    </location>
    <ligand>
        <name>Mg(2+)</name>
        <dbReference type="ChEBI" id="CHEBI:18420"/>
        <label>2</label>
        <note>catalytic; for RNase H activity</note>
    </ligand>
</feature>
<feature type="binding site" evidence="1">
    <location>
        <position position="1108"/>
    </location>
    <ligand>
        <name>Mg(2+)</name>
        <dbReference type="ChEBI" id="CHEBI:18420"/>
        <label>2</label>
        <note>catalytic; for RNase H activity</note>
    </ligand>
</feature>
<feature type="binding site" evidence="1">
    <location>
        <position position="1159"/>
    </location>
    <ligand>
        <name>Mg(2+)</name>
        <dbReference type="ChEBI" id="CHEBI:18420"/>
        <label>2</label>
        <note>catalytic; for RNase H activity</note>
    </ligand>
</feature>
<feature type="binding site" evidence="14">
    <location>
        <position position="1182"/>
    </location>
    <ligand>
        <name>Zn(2+)</name>
        <dbReference type="ChEBI" id="CHEBI:29105"/>
    </ligand>
</feature>
<feature type="binding site" evidence="14">
    <location>
        <position position="1186"/>
    </location>
    <ligand>
        <name>Zn(2+)</name>
        <dbReference type="ChEBI" id="CHEBI:29105"/>
    </ligand>
</feature>
<feature type="binding site" evidence="14">
    <location>
        <position position="1210"/>
    </location>
    <ligand>
        <name>Zn(2+)</name>
        <dbReference type="ChEBI" id="CHEBI:29105"/>
    </ligand>
</feature>
<feature type="binding site" evidence="14">
    <location>
        <position position="1213"/>
    </location>
    <ligand>
        <name>Zn(2+)</name>
        <dbReference type="ChEBI" id="CHEBI:29105"/>
    </ligand>
</feature>
<feature type="binding site" evidence="1">
    <location>
        <position position="1234"/>
    </location>
    <ligand>
        <name>Mg(2+)</name>
        <dbReference type="ChEBI" id="CHEBI:18420"/>
        <label>3</label>
        <note>catalytic; for integrase activity</note>
    </ligand>
</feature>
<feature type="binding site" evidence="1">
    <location>
        <position position="1286"/>
    </location>
    <ligand>
        <name>Mg(2+)</name>
        <dbReference type="ChEBI" id="CHEBI:18420"/>
        <label>3</label>
        <note>catalytic; for integrase activity</note>
    </ligand>
</feature>
<feature type="binding site" evidence="5">
    <location>
        <position position="1322"/>
    </location>
    <ligand>
        <name>Mg(2+)</name>
        <dbReference type="ChEBI" id="CHEBI:18420"/>
        <label>3</label>
        <note>catalytic; for integrase activity</note>
    </ligand>
</feature>
<feature type="site" description="Cleavage; by viral protease" evidence="1">
    <location>
        <begin position="135"/>
        <end position="136"/>
    </location>
</feature>
<feature type="site" description="Cis/trans isomerization of proline peptide bond; by human PPIA/CYPA" evidence="1">
    <location>
        <begin position="222"/>
        <end position="223"/>
    </location>
</feature>
<feature type="site" description="Cleavage; by viral protease" evidence="1">
    <location>
        <begin position="365"/>
        <end position="366"/>
    </location>
</feature>
<feature type="site" description="Cleavage; by viral protease" evidence="1">
    <location>
        <begin position="382"/>
        <end position="383"/>
    </location>
</feature>
<feature type="site" description="Cleavage; by viral protease" evidence="9">
    <location>
        <begin position="431"/>
        <end position="432"/>
    </location>
</feature>
<feature type="site" description="Cleavage; by viral protease" evidence="1">
    <location>
        <begin position="445"/>
        <end position="446"/>
    </location>
</feature>
<feature type="site" description="Cleavage; by viral protease" evidence="1">
    <location>
        <begin position="512"/>
        <end position="513"/>
    </location>
</feature>
<feature type="site" description="Cleavage; by viral protease" evidence="1">
    <location>
        <begin position="611"/>
        <end position="612"/>
    </location>
</feature>
<feature type="site" description="Essential for RT p66/p51 heterodimerization" evidence="1">
    <location>
        <position position="1011"/>
    </location>
</feature>
<feature type="site" description="Essential for RT p66/p51 heterodimerization" evidence="1">
    <location>
        <position position="1024"/>
    </location>
</feature>
<feature type="site" description="Cleavage; by viral protease; partial" evidence="1">
    <location>
        <begin position="1050"/>
        <end position="1051"/>
    </location>
</feature>
<feature type="site" description="Cleavage; by viral protease" evidence="1">
    <location>
        <begin position="1170"/>
        <end position="1171"/>
    </location>
</feature>
<feature type="modified residue" description="Phosphotyrosine; by host" evidence="1">
    <location>
        <position position="135"/>
    </location>
</feature>
<feature type="lipid moiety-binding region" description="N-myristoyl glycine; by host" evidence="1">
    <location>
        <position position="2"/>
    </location>
</feature>
<accession>P18096</accession>
<accession>Q76605</accession>
<keyword id="KW-0014">AIDS</keyword>
<keyword id="KW-0064">Aspartyl protease</keyword>
<keyword id="KW-0167">Capsid protein</keyword>
<keyword id="KW-0229">DNA integration</keyword>
<keyword id="KW-0233">DNA recombination</keyword>
<keyword id="KW-0238">DNA-binding</keyword>
<keyword id="KW-0239">DNA-directed DNA polymerase</keyword>
<keyword id="KW-0255">Endonuclease</keyword>
<keyword id="KW-1262">Eukaryotic host gene expression shutoff by virus</keyword>
<keyword id="KW-1193">Eukaryotic host translation shutoff by virus</keyword>
<keyword id="KW-1032">Host cell membrane</keyword>
<keyword id="KW-1035">Host cytoplasm</keyword>
<keyword id="KW-1039">Host endosome</keyword>
<keyword id="KW-1190">Host gene expression shutoff by virus</keyword>
<keyword id="KW-1043">Host membrane</keyword>
<keyword id="KW-1048">Host nucleus</keyword>
<keyword id="KW-0945">Host-virus interaction</keyword>
<keyword id="KW-0378">Hydrolase</keyword>
<keyword id="KW-0446">Lipid-binding</keyword>
<keyword id="KW-0449">Lipoprotein</keyword>
<keyword id="KW-0460">Magnesium</keyword>
<keyword id="KW-0472">Membrane</keyword>
<keyword id="KW-0479">Metal-binding</keyword>
<keyword id="KW-0511">Multifunctional enzyme</keyword>
<keyword id="KW-0519">Myristate</keyword>
<keyword id="KW-0540">Nuclease</keyword>
<keyword id="KW-0548">Nucleotidyltransferase</keyword>
<keyword id="KW-0597">Phosphoprotein</keyword>
<keyword id="KW-0645">Protease</keyword>
<keyword id="KW-1185">Reference proteome</keyword>
<keyword id="KW-0677">Repeat</keyword>
<keyword id="KW-0688">Ribosomal frameshifting</keyword>
<keyword id="KW-0694">RNA-binding</keyword>
<keyword id="KW-0695">RNA-directed DNA polymerase</keyword>
<keyword id="KW-0808">Transferase</keyword>
<keyword id="KW-1179">Viral genome integration</keyword>
<keyword id="KW-0543">Viral nucleoprotein</keyword>
<keyword id="KW-1163">Viral penetration into host nucleus</keyword>
<keyword id="KW-1188">Viral release from host cell</keyword>
<keyword id="KW-0946">Virion</keyword>
<keyword id="KW-0917">Virion maturation</keyword>
<keyword id="KW-1160">Virus entry into host cell</keyword>
<keyword id="KW-0862">Zinc</keyword>
<keyword id="KW-0863">Zinc-finger</keyword>
<dbReference type="EC" id="3.4.23.47"/>
<dbReference type="EC" id="2.7.7.49"/>
<dbReference type="EC" id="2.7.7.7"/>
<dbReference type="EC" id="3.1.26.13"/>
<dbReference type="EC" id="3.1.13.2"/>
<dbReference type="EC" id="2.7.7.-" evidence="5"/>
<dbReference type="EC" id="3.1.-.-" evidence="5"/>
<dbReference type="EMBL" id="M30502">
    <property type="protein sequence ID" value="AAB00737.1"/>
    <property type="status" value="ALT_SEQ"/>
    <property type="molecule type" value="Genomic_DNA"/>
</dbReference>
<dbReference type="SMR" id="P18096"/>
<dbReference type="MEROPS" id="A02.002"/>
<dbReference type="PRO" id="PR:P18096"/>
<dbReference type="Proteomes" id="UP000002242">
    <property type="component" value="Segment"/>
</dbReference>
<dbReference type="GO" id="GO:0043657">
    <property type="term" value="C:host cell"/>
    <property type="evidence" value="ECO:0007669"/>
    <property type="project" value="GOC"/>
</dbReference>
<dbReference type="GO" id="GO:0042025">
    <property type="term" value="C:host cell nucleus"/>
    <property type="evidence" value="ECO:0007669"/>
    <property type="project" value="UniProtKB-SubCell"/>
</dbReference>
<dbReference type="GO" id="GO:0020002">
    <property type="term" value="C:host cell plasma membrane"/>
    <property type="evidence" value="ECO:0007669"/>
    <property type="project" value="UniProtKB-SubCell"/>
</dbReference>
<dbReference type="GO" id="GO:0072494">
    <property type="term" value="C:host multivesicular body"/>
    <property type="evidence" value="ECO:0007669"/>
    <property type="project" value="UniProtKB-SubCell"/>
</dbReference>
<dbReference type="GO" id="GO:0016020">
    <property type="term" value="C:membrane"/>
    <property type="evidence" value="ECO:0007669"/>
    <property type="project" value="UniProtKB-KW"/>
</dbReference>
<dbReference type="GO" id="GO:0019013">
    <property type="term" value="C:viral nucleocapsid"/>
    <property type="evidence" value="ECO:0007669"/>
    <property type="project" value="UniProtKB-KW"/>
</dbReference>
<dbReference type="GO" id="GO:0055036">
    <property type="term" value="C:virion membrane"/>
    <property type="evidence" value="ECO:0007669"/>
    <property type="project" value="UniProtKB-SubCell"/>
</dbReference>
<dbReference type="GO" id="GO:0004190">
    <property type="term" value="F:aspartic-type endopeptidase activity"/>
    <property type="evidence" value="ECO:0007669"/>
    <property type="project" value="UniProtKB-KW"/>
</dbReference>
<dbReference type="GO" id="GO:0003677">
    <property type="term" value="F:DNA binding"/>
    <property type="evidence" value="ECO:0007669"/>
    <property type="project" value="UniProtKB-KW"/>
</dbReference>
<dbReference type="GO" id="GO:0003887">
    <property type="term" value="F:DNA-directed DNA polymerase activity"/>
    <property type="evidence" value="ECO:0007669"/>
    <property type="project" value="UniProtKB-KW"/>
</dbReference>
<dbReference type="GO" id="GO:0004533">
    <property type="term" value="F:exoribonuclease H activity"/>
    <property type="evidence" value="ECO:0007669"/>
    <property type="project" value="UniProtKB-EC"/>
</dbReference>
<dbReference type="GO" id="GO:0008289">
    <property type="term" value="F:lipid binding"/>
    <property type="evidence" value="ECO:0007669"/>
    <property type="project" value="UniProtKB-KW"/>
</dbReference>
<dbReference type="GO" id="GO:0035613">
    <property type="term" value="F:RNA stem-loop binding"/>
    <property type="evidence" value="ECO:0007669"/>
    <property type="project" value="TreeGrafter"/>
</dbReference>
<dbReference type="GO" id="GO:0003964">
    <property type="term" value="F:RNA-directed DNA polymerase activity"/>
    <property type="evidence" value="ECO:0007669"/>
    <property type="project" value="UniProtKB-KW"/>
</dbReference>
<dbReference type="GO" id="GO:0004523">
    <property type="term" value="F:RNA-DNA hybrid ribonuclease activity"/>
    <property type="evidence" value="ECO:0007669"/>
    <property type="project" value="InterPro"/>
</dbReference>
<dbReference type="GO" id="GO:0005198">
    <property type="term" value="F:structural molecule activity"/>
    <property type="evidence" value="ECO:0007669"/>
    <property type="project" value="InterPro"/>
</dbReference>
<dbReference type="GO" id="GO:0008270">
    <property type="term" value="F:zinc ion binding"/>
    <property type="evidence" value="ECO:0007669"/>
    <property type="project" value="UniProtKB-KW"/>
</dbReference>
<dbReference type="GO" id="GO:0015074">
    <property type="term" value="P:DNA integration"/>
    <property type="evidence" value="ECO:0007669"/>
    <property type="project" value="UniProtKB-KW"/>
</dbReference>
<dbReference type="GO" id="GO:0006310">
    <property type="term" value="P:DNA recombination"/>
    <property type="evidence" value="ECO:0007669"/>
    <property type="project" value="UniProtKB-KW"/>
</dbReference>
<dbReference type="GO" id="GO:0075713">
    <property type="term" value="P:establishment of integrated proviral latency"/>
    <property type="evidence" value="ECO:0007669"/>
    <property type="project" value="UniProtKB-KW"/>
</dbReference>
<dbReference type="GO" id="GO:0006508">
    <property type="term" value="P:proteolysis"/>
    <property type="evidence" value="ECO:0007669"/>
    <property type="project" value="UniProtKB-KW"/>
</dbReference>
<dbReference type="GO" id="GO:0046718">
    <property type="term" value="P:symbiont entry into host cell"/>
    <property type="evidence" value="ECO:0007669"/>
    <property type="project" value="UniProtKB-KW"/>
</dbReference>
<dbReference type="GO" id="GO:0039657">
    <property type="term" value="P:symbiont-mediated suppression of host gene expression"/>
    <property type="evidence" value="ECO:0007669"/>
    <property type="project" value="UniProtKB-KW"/>
</dbReference>
<dbReference type="GO" id="GO:0044826">
    <property type="term" value="P:viral genome integration into host DNA"/>
    <property type="evidence" value="ECO:0007669"/>
    <property type="project" value="UniProtKB-KW"/>
</dbReference>
<dbReference type="GO" id="GO:0075732">
    <property type="term" value="P:viral penetration into host nucleus"/>
    <property type="evidence" value="ECO:0007669"/>
    <property type="project" value="UniProtKB-KW"/>
</dbReference>
<dbReference type="GO" id="GO:0075523">
    <property type="term" value="P:viral translational frameshifting"/>
    <property type="evidence" value="ECO:0007669"/>
    <property type="project" value="UniProtKB-KW"/>
</dbReference>
<dbReference type="CDD" id="cd05482">
    <property type="entry name" value="HIV_retropepsin_like"/>
    <property type="match status" value="1"/>
</dbReference>
<dbReference type="FunFam" id="3.30.70.270:FF:000006">
    <property type="entry name" value="Gag-Pol polyprotein"/>
    <property type="match status" value="1"/>
</dbReference>
<dbReference type="Gene3D" id="1.10.10.200">
    <property type="match status" value="1"/>
</dbReference>
<dbReference type="Gene3D" id="1.10.1200.30">
    <property type="match status" value="1"/>
</dbReference>
<dbReference type="Gene3D" id="3.30.70.270">
    <property type="match status" value="3"/>
</dbReference>
<dbReference type="Gene3D" id="2.40.70.10">
    <property type="entry name" value="Acid Proteases"/>
    <property type="match status" value="1"/>
</dbReference>
<dbReference type="Gene3D" id="3.10.10.10">
    <property type="entry name" value="HIV Type 1 Reverse Transcriptase, subunit A, domain 1"/>
    <property type="match status" value="1"/>
</dbReference>
<dbReference type="Gene3D" id="1.10.375.10">
    <property type="entry name" value="Human Immunodeficiency Virus Type 1 Capsid Protein"/>
    <property type="match status" value="1"/>
</dbReference>
<dbReference type="Gene3D" id="1.10.150.90">
    <property type="entry name" value="Immunodeficiency lentiviruses, gag gene matrix protein p17"/>
    <property type="match status" value="1"/>
</dbReference>
<dbReference type="Gene3D" id="2.30.30.10">
    <property type="entry name" value="Integrase, C-terminal domain superfamily, retroviral"/>
    <property type="match status" value="1"/>
</dbReference>
<dbReference type="Gene3D" id="3.30.420.10">
    <property type="entry name" value="Ribonuclease H-like superfamily/Ribonuclease H"/>
    <property type="match status" value="2"/>
</dbReference>
<dbReference type="Gene3D" id="1.20.5.760">
    <property type="entry name" value="Single helix bin"/>
    <property type="match status" value="1"/>
</dbReference>
<dbReference type="Gene3D" id="4.10.60.10">
    <property type="entry name" value="Zinc finger, CCHC-type"/>
    <property type="match status" value="1"/>
</dbReference>
<dbReference type="InterPro" id="IPR001969">
    <property type="entry name" value="Aspartic_peptidase_AS"/>
</dbReference>
<dbReference type="InterPro" id="IPR043502">
    <property type="entry name" value="DNA/RNA_pol_sf"/>
</dbReference>
<dbReference type="InterPro" id="IPR045345">
    <property type="entry name" value="Gag_p24_C"/>
</dbReference>
<dbReference type="InterPro" id="IPR017856">
    <property type="entry name" value="Integrase-like_N"/>
</dbReference>
<dbReference type="InterPro" id="IPR036862">
    <property type="entry name" value="Integrase_C_dom_sf_retrovir"/>
</dbReference>
<dbReference type="InterPro" id="IPR001037">
    <property type="entry name" value="Integrase_C_retrovir"/>
</dbReference>
<dbReference type="InterPro" id="IPR001584">
    <property type="entry name" value="Integrase_cat-core"/>
</dbReference>
<dbReference type="InterPro" id="IPR003308">
    <property type="entry name" value="Integrase_Zn-bd_dom_N"/>
</dbReference>
<dbReference type="InterPro" id="IPR000071">
    <property type="entry name" value="Lentvrl_matrix_N"/>
</dbReference>
<dbReference type="InterPro" id="IPR012344">
    <property type="entry name" value="Matrix_HIV/RSV_N"/>
</dbReference>
<dbReference type="InterPro" id="IPR001995">
    <property type="entry name" value="Peptidase_A2_cat"/>
</dbReference>
<dbReference type="InterPro" id="IPR021109">
    <property type="entry name" value="Peptidase_aspartic_dom_sf"/>
</dbReference>
<dbReference type="InterPro" id="IPR034170">
    <property type="entry name" value="Retropepsin-like_cat_dom"/>
</dbReference>
<dbReference type="InterPro" id="IPR018061">
    <property type="entry name" value="Retropepsins"/>
</dbReference>
<dbReference type="InterPro" id="IPR008916">
    <property type="entry name" value="Retrov_capsid_C"/>
</dbReference>
<dbReference type="InterPro" id="IPR008919">
    <property type="entry name" value="Retrov_capsid_N"/>
</dbReference>
<dbReference type="InterPro" id="IPR010999">
    <property type="entry name" value="Retrovr_matrix"/>
</dbReference>
<dbReference type="InterPro" id="IPR043128">
    <property type="entry name" value="Rev_trsase/Diguanyl_cyclase"/>
</dbReference>
<dbReference type="InterPro" id="IPR012337">
    <property type="entry name" value="RNaseH-like_sf"/>
</dbReference>
<dbReference type="InterPro" id="IPR002156">
    <property type="entry name" value="RNaseH_domain"/>
</dbReference>
<dbReference type="InterPro" id="IPR036397">
    <property type="entry name" value="RNaseH_sf"/>
</dbReference>
<dbReference type="InterPro" id="IPR000477">
    <property type="entry name" value="RT_dom"/>
</dbReference>
<dbReference type="InterPro" id="IPR010659">
    <property type="entry name" value="RVT_connect"/>
</dbReference>
<dbReference type="InterPro" id="IPR010661">
    <property type="entry name" value="RVT_thumb"/>
</dbReference>
<dbReference type="InterPro" id="IPR001878">
    <property type="entry name" value="Znf_CCHC"/>
</dbReference>
<dbReference type="InterPro" id="IPR036875">
    <property type="entry name" value="Znf_CCHC_sf"/>
</dbReference>
<dbReference type="PANTHER" id="PTHR41694">
    <property type="entry name" value="ENDOGENOUS RETROVIRUS GROUP K MEMBER POL PROTEIN"/>
    <property type="match status" value="1"/>
</dbReference>
<dbReference type="PANTHER" id="PTHR41694:SF3">
    <property type="entry name" value="RNA-DIRECTED DNA POLYMERASE-RELATED"/>
    <property type="match status" value="1"/>
</dbReference>
<dbReference type="Pfam" id="PF00540">
    <property type="entry name" value="Gag_p17"/>
    <property type="match status" value="1"/>
</dbReference>
<dbReference type="Pfam" id="PF00607">
    <property type="entry name" value="Gag_p24"/>
    <property type="match status" value="1"/>
</dbReference>
<dbReference type="Pfam" id="PF19317">
    <property type="entry name" value="Gag_p24_C"/>
    <property type="match status" value="1"/>
</dbReference>
<dbReference type="Pfam" id="PF00552">
    <property type="entry name" value="IN_DBD_C"/>
    <property type="match status" value="1"/>
</dbReference>
<dbReference type="Pfam" id="PF02022">
    <property type="entry name" value="Integrase_Zn"/>
    <property type="match status" value="1"/>
</dbReference>
<dbReference type="Pfam" id="PF00075">
    <property type="entry name" value="RNase_H"/>
    <property type="match status" value="1"/>
</dbReference>
<dbReference type="Pfam" id="PF00665">
    <property type="entry name" value="rve"/>
    <property type="match status" value="1"/>
</dbReference>
<dbReference type="Pfam" id="PF00077">
    <property type="entry name" value="RVP"/>
    <property type="match status" value="1"/>
</dbReference>
<dbReference type="Pfam" id="PF00078">
    <property type="entry name" value="RVT_1"/>
    <property type="match status" value="1"/>
</dbReference>
<dbReference type="Pfam" id="PF06815">
    <property type="entry name" value="RVT_connect"/>
    <property type="match status" value="1"/>
</dbReference>
<dbReference type="Pfam" id="PF06817">
    <property type="entry name" value="RVT_thumb"/>
    <property type="match status" value="1"/>
</dbReference>
<dbReference type="Pfam" id="PF00098">
    <property type="entry name" value="zf-CCHC"/>
    <property type="match status" value="1"/>
</dbReference>
<dbReference type="PRINTS" id="PR00234">
    <property type="entry name" value="HIV1MATRIX"/>
</dbReference>
<dbReference type="SMART" id="SM00343">
    <property type="entry name" value="ZnF_C2HC"/>
    <property type="match status" value="2"/>
</dbReference>
<dbReference type="SUPFAM" id="SSF50630">
    <property type="entry name" value="Acid proteases"/>
    <property type="match status" value="1"/>
</dbReference>
<dbReference type="SUPFAM" id="SSF50122">
    <property type="entry name" value="DNA-binding domain of retroviral integrase"/>
    <property type="match status" value="1"/>
</dbReference>
<dbReference type="SUPFAM" id="SSF56672">
    <property type="entry name" value="DNA/RNA polymerases"/>
    <property type="match status" value="1"/>
</dbReference>
<dbReference type="SUPFAM" id="SSF46919">
    <property type="entry name" value="N-terminal Zn binding domain of HIV integrase"/>
    <property type="match status" value="1"/>
</dbReference>
<dbReference type="SUPFAM" id="SSF47836">
    <property type="entry name" value="Retroviral matrix proteins"/>
    <property type="match status" value="1"/>
</dbReference>
<dbReference type="SUPFAM" id="SSF47353">
    <property type="entry name" value="Retrovirus capsid dimerization domain-like"/>
    <property type="match status" value="1"/>
</dbReference>
<dbReference type="SUPFAM" id="SSF47943">
    <property type="entry name" value="Retrovirus capsid protein, N-terminal core domain"/>
    <property type="match status" value="1"/>
</dbReference>
<dbReference type="SUPFAM" id="SSF57756">
    <property type="entry name" value="Retrovirus zinc finger-like domains"/>
    <property type="match status" value="1"/>
</dbReference>
<dbReference type="SUPFAM" id="SSF53098">
    <property type="entry name" value="Ribonuclease H-like"/>
    <property type="match status" value="2"/>
</dbReference>
<dbReference type="PROSITE" id="PS50175">
    <property type="entry name" value="ASP_PROT_RETROV"/>
    <property type="match status" value="1"/>
</dbReference>
<dbReference type="PROSITE" id="PS00141">
    <property type="entry name" value="ASP_PROTEASE"/>
    <property type="match status" value="1"/>
</dbReference>
<dbReference type="PROSITE" id="PS50994">
    <property type="entry name" value="INTEGRASE"/>
    <property type="match status" value="1"/>
</dbReference>
<dbReference type="PROSITE" id="PS51027">
    <property type="entry name" value="INTEGRASE_DBD"/>
    <property type="match status" value="1"/>
</dbReference>
<dbReference type="PROSITE" id="PS50879">
    <property type="entry name" value="RNASE_H_1"/>
    <property type="match status" value="1"/>
</dbReference>
<dbReference type="PROSITE" id="PS50878">
    <property type="entry name" value="RT_POL"/>
    <property type="match status" value="1"/>
</dbReference>
<dbReference type="PROSITE" id="PS50158">
    <property type="entry name" value="ZF_CCHC"/>
    <property type="match status" value="2"/>
</dbReference>
<dbReference type="PROSITE" id="PS50876">
    <property type="entry name" value="ZF_INTEGRASE"/>
    <property type="match status" value="1"/>
</dbReference>
<name>POL_HV2BE</name>
<reference key="1">
    <citation type="journal article" date="1990" name="Virology">
        <title>A novel proviral clone of HIV-2: biological and phylogenetic relationship to other primate immunodeficiency viruses.</title>
        <authorList>
            <person name="Kirchhoff F."/>
            <person name="Jentsch K."/>
            <person name="Bachmann B."/>
            <person name="Stuke A."/>
            <person name="Laloux C."/>
            <person name="Lueke W."/>
            <person name="Stahl-Henning C."/>
            <person name="Schneider J."/>
            <person name="Nieselt K."/>
            <person name="Eigen M."/>
            <person name="Hunsmann G."/>
        </authorList>
    </citation>
    <scope>NUCLEOTIDE SEQUENCE [GENOMIC DNA]</scope>
</reference>
<reference key="2">
    <citation type="journal article" date="1996" name="Curr. Top. Microbiol. Immunol.">
        <title>Proteolytic processing and particle maturation.</title>
        <authorList>
            <person name="Vogt V.M."/>
        </authorList>
    </citation>
    <scope>REVIEW</scope>
</reference>
<reference key="3">
    <citation type="journal article" date="1999" name="J. Mol. Biol.">
        <title>Structural biology of HIV.</title>
        <authorList>
            <person name="Turner B.G."/>
            <person name="Summers M.F."/>
        </authorList>
    </citation>
    <scope>REVIEW</scope>
</reference>
<reference key="4">
    <citation type="journal article" date="2001" name="Annu. Rev. Genet.">
        <title>Mechanisms of retroviral recombination.</title>
        <authorList>
            <person name="Negroni M."/>
            <person name="Buc H."/>
        </authorList>
    </citation>
    <scope>REVIEW</scope>
</reference>
<reference key="5">
    <citation type="journal article" date="2002" name="Genome Biol.">
        <title>Retroviral proteases.</title>
        <authorList>
            <person name="Dunn B.M."/>
            <person name="Goodenow M.M."/>
            <person name="Gustchina A."/>
            <person name="Wlodawer A."/>
        </authorList>
    </citation>
    <scope>REVIEW</scope>
</reference>
<gene>
    <name type="primary">gag-pol</name>
</gene>
<proteinExistence type="inferred from homology"/>